<comment type="function">
    <text evidence="2 3">G-protein coupled receptor for cannabinoids (By similarity). Mediates many cannabinoid-induced effects in the central nervous system (CNS), as well as in peripheral tissues (By similarity). Regulates cellular respiration and energy production in response to cannabinoids (By similarity). Signaling typically involves reduction in cyclic AMP (By similarity).</text>
</comment>
<comment type="subcellular location">
    <subcellularLocation>
        <location evidence="3">Cell membrane</location>
        <topology evidence="2">Multi-pass membrane protein</topology>
    </subcellularLocation>
    <subcellularLocation>
        <location evidence="3">Mitochondrion outer membrane</location>
    </subcellularLocation>
    <subcellularLocation>
        <location evidence="1">Cell projection</location>
        <location evidence="1">Axon</location>
    </subcellularLocation>
    <subcellularLocation>
        <location evidence="1">Presynapse</location>
    </subcellularLocation>
    <text evidence="3">Unexpectedly, in the mitochondria, the C-terminus is located in the mitochondrial intermembrane space, a compartment topologically considered as extracellular. In canonical seven-transmembrane G-protein coupled receptors, the C-terminus is cytosolic.</text>
</comment>
<comment type="PTM">
    <text evidence="2">Palmitoylation at Cys-412 is important for recruitment at both plasma membrane and lipid rafts and association with G protein alpha subunits.</text>
</comment>
<comment type="similarity">
    <text evidence="5">Belongs to the G-protein coupled receptor 1 family.</text>
</comment>
<evidence type="ECO:0000250" key="1">
    <source>
        <dbReference type="UniProtKB" id="P20272"/>
    </source>
</evidence>
<evidence type="ECO:0000250" key="2">
    <source>
        <dbReference type="UniProtKB" id="P21554"/>
    </source>
</evidence>
<evidence type="ECO:0000250" key="3">
    <source>
        <dbReference type="UniProtKB" id="P47746"/>
    </source>
</evidence>
<evidence type="ECO:0000255" key="4"/>
<evidence type="ECO:0000255" key="5">
    <source>
        <dbReference type="PROSITE-ProRule" id="PRU00521"/>
    </source>
</evidence>
<evidence type="ECO:0000256" key="6">
    <source>
        <dbReference type="SAM" id="MobiDB-lite"/>
    </source>
</evidence>
<feature type="chain" id="PRO_0000069321" description="Cannabinoid receptor type 1B">
    <location>
        <begin position="1"/>
        <end position="470"/>
    </location>
</feature>
<feature type="topological domain" description="Extracellular" evidence="4">
    <location>
        <begin position="1"/>
        <end position="113"/>
    </location>
</feature>
<feature type="transmembrane region" description="Helical; Name=1" evidence="4">
    <location>
        <begin position="114"/>
        <end position="139"/>
    </location>
</feature>
<feature type="topological domain" description="Cytoplasmic" evidence="4">
    <location>
        <begin position="140"/>
        <end position="151"/>
    </location>
</feature>
<feature type="transmembrane region" description="Helical; Name=2" evidence="4">
    <location>
        <begin position="152"/>
        <end position="172"/>
    </location>
</feature>
<feature type="topological domain" description="Extracellular" evidence="4">
    <location>
        <begin position="173"/>
        <end position="184"/>
    </location>
</feature>
<feature type="transmembrane region" description="Helical; Name=3" evidence="4">
    <location>
        <begin position="185"/>
        <end position="209"/>
    </location>
</feature>
<feature type="topological domain" description="Cytoplasmic" evidence="4">
    <location>
        <begin position="210"/>
        <end position="229"/>
    </location>
</feature>
<feature type="transmembrane region" description="Helical; Name=4" evidence="4">
    <location>
        <begin position="230"/>
        <end position="252"/>
    </location>
</feature>
<feature type="topological domain" description="Extracellular" evidence="4">
    <location>
        <begin position="253"/>
        <end position="270"/>
    </location>
</feature>
<feature type="transmembrane region" description="Helical; Name=5" evidence="4">
    <location>
        <begin position="271"/>
        <end position="296"/>
    </location>
</feature>
<feature type="topological domain" description="Cytoplasmic" evidence="4">
    <location>
        <begin position="297"/>
        <end position="341"/>
    </location>
</feature>
<feature type="transmembrane region" description="Helical; Name=6" evidence="4">
    <location>
        <begin position="342"/>
        <end position="362"/>
    </location>
</feature>
<feature type="topological domain" description="Extracellular" evidence="4">
    <location>
        <begin position="363"/>
        <end position="374"/>
    </location>
</feature>
<feature type="transmembrane region" description="Helical; Name=7" evidence="4">
    <location>
        <begin position="375"/>
        <end position="396"/>
    </location>
</feature>
<feature type="topological domain" description="Cytoplasmic" evidence="4">
    <location>
        <begin position="397"/>
        <end position="470"/>
    </location>
</feature>
<feature type="region of interest" description="Disordered" evidence="6">
    <location>
        <begin position="418"/>
        <end position="450"/>
    </location>
</feature>
<feature type="compositionally biased region" description="Polar residues" evidence="6">
    <location>
        <begin position="418"/>
        <end position="434"/>
    </location>
</feature>
<feature type="lipid moiety-binding region" description="S-palmitoyl cysteine" evidence="2">
    <location>
        <position position="412"/>
    </location>
</feature>
<feature type="glycosylation site" description="N-linked (GlcNAc...) asparagine" evidence="4">
    <location>
        <position position="78"/>
    </location>
</feature>
<feature type="glycosylation site" description="N-linked (GlcNAc...) asparagine" evidence="4">
    <location>
        <position position="86"/>
    </location>
</feature>
<keyword id="KW-1003">Cell membrane</keyword>
<keyword id="KW-0966">Cell projection</keyword>
<keyword id="KW-0297">G-protein coupled receptor</keyword>
<keyword id="KW-0325">Glycoprotein</keyword>
<keyword id="KW-0449">Lipoprotein</keyword>
<keyword id="KW-0472">Membrane</keyword>
<keyword id="KW-0496">Mitochondrion</keyword>
<keyword id="KW-1000">Mitochondrion outer membrane</keyword>
<keyword id="KW-0564">Palmitate</keyword>
<keyword id="KW-0675">Receptor</keyword>
<keyword id="KW-1185">Reference proteome</keyword>
<keyword id="KW-0770">Synapse</keyword>
<keyword id="KW-0807">Transducer</keyword>
<keyword id="KW-0812">Transmembrane</keyword>
<keyword id="KW-1133">Transmembrane helix</keyword>
<accession>Q98895</accession>
<gene>
    <name type="primary">cnr1b</name>
    <name type="synonym">cb1b</name>
</gene>
<organism>
    <name type="scientific">Takifugu rubripes</name>
    <name type="common">Japanese pufferfish</name>
    <name type="synonym">Fugu rubripes</name>
    <dbReference type="NCBI Taxonomy" id="31033"/>
    <lineage>
        <taxon>Eukaryota</taxon>
        <taxon>Metazoa</taxon>
        <taxon>Chordata</taxon>
        <taxon>Craniata</taxon>
        <taxon>Vertebrata</taxon>
        <taxon>Euteleostomi</taxon>
        <taxon>Actinopterygii</taxon>
        <taxon>Neopterygii</taxon>
        <taxon>Teleostei</taxon>
        <taxon>Neoteleostei</taxon>
        <taxon>Acanthomorphata</taxon>
        <taxon>Eupercaria</taxon>
        <taxon>Tetraodontiformes</taxon>
        <taxon>Tetradontoidea</taxon>
        <taxon>Tetraodontidae</taxon>
        <taxon>Takifugu</taxon>
    </lineage>
</organism>
<dbReference type="EMBL" id="X94402">
    <property type="protein sequence ID" value="CAA64175.1"/>
    <property type="molecule type" value="Genomic_DNA"/>
</dbReference>
<dbReference type="SMR" id="Q98895"/>
<dbReference type="STRING" id="31033.ENSTRUP00000053094"/>
<dbReference type="GlyCosmos" id="Q98895">
    <property type="glycosylation" value="2 sites, No reported glycans"/>
</dbReference>
<dbReference type="eggNOG" id="KOG3656">
    <property type="taxonomic scope" value="Eukaryota"/>
</dbReference>
<dbReference type="InParanoid" id="Q98895"/>
<dbReference type="Proteomes" id="UP000005226">
    <property type="component" value="Unplaced"/>
</dbReference>
<dbReference type="GO" id="GO:0030424">
    <property type="term" value="C:axon"/>
    <property type="evidence" value="ECO:0007669"/>
    <property type="project" value="UniProtKB-SubCell"/>
</dbReference>
<dbReference type="GO" id="GO:0005741">
    <property type="term" value="C:mitochondrial outer membrane"/>
    <property type="evidence" value="ECO:0007669"/>
    <property type="project" value="UniProtKB-SubCell"/>
</dbReference>
<dbReference type="GO" id="GO:0005886">
    <property type="term" value="C:plasma membrane"/>
    <property type="evidence" value="ECO:0007669"/>
    <property type="project" value="UniProtKB-SubCell"/>
</dbReference>
<dbReference type="GO" id="GO:0098793">
    <property type="term" value="C:presynapse"/>
    <property type="evidence" value="ECO:0007669"/>
    <property type="project" value="UniProtKB-SubCell"/>
</dbReference>
<dbReference type="GO" id="GO:0004949">
    <property type="term" value="F:cannabinoid receptor activity"/>
    <property type="evidence" value="ECO:0007669"/>
    <property type="project" value="InterPro"/>
</dbReference>
<dbReference type="CDD" id="cd15340">
    <property type="entry name" value="7tmA_CB1"/>
    <property type="match status" value="1"/>
</dbReference>
<dbReference type="FunFam" id="1.20.1070.10:FF:000072">
    <property type="entry name" value="Cannabinoid receptor 1"/>
    <property type="match status" value="1"/>
</dbReference>
<dbReference type="Gene3D" id="1.20.1070.10">
    <property type="entry name" value="Rhodopsin 7-helix transmembrane proteins"/>
    <property type="match status" value="1"/>
</dbReference>
<dbReference type="InterPro" id="IPR000810">
    <property type="entry name" value="Canbinoid_rcpt_1"/>
</dbReference>
<dbReference type="InterPro" id="IPR002230">
    <property type="entry name" value="Cnbnoid_rcpt"/>
</dbReference>
<dbReference type="InterPro" id="IPR000276">
    <property type="entry name" value="GPCR_Rhodpsn"/>
</dbReference>
<dbReference type="InterPro" id="IPR017452">
    <property type="entry name" value="GPCR_Rhodpsn_7TM"/>
</dbReference>
<dbReference type="PANTHER" id="PTHR22750">
    <property type="entry name" value="G-PROTEIN COUPLED RECEPTOR"/>
    <property type="match status" value="1"/>
</dbReference>
<dbReference type="Pfam" id="PF00001">
    <property type="entry name" value="7tm_1"/>
    <property type="match status" value="1"/>
</dbReference>
<dbReference type="PIRSF" id="PIRSF037995">
    <property type="entry name" value="Cnoid_rcpt_1"/>
    <property type="match status" value="1"/>
</dbReference>
<dbReference type="PRINTS" id="PR00522">
    <property type="entry name" value="CANABINOID1R"/>
</dbReference>
<dbReference type="PRINTS" id="PR00362">
    <property type="entry name" value="CANNABINOIDR"/>
</dbReference>
<dbReference type="PRINTS" id="PR00237">
    <property type="entry name" value="GPCRRHODOPSN"/>
</dbReference>
<dbReference type="SMART" id="SM01381">
    <property type="entry name" value="7TM_GPCR_Srsx"/>
    <property type="match status" value="1"/>
</dbReference>
<dbReference type="SUPFAM" id="SSF81321">
    <property type="entry name" value="Family A G protein-coupled receptor-like"/>
    <property type="match status" value="1"/>
</dbReference>
<dbReference type="PROSITE" id="PS00237">
    <property type="entry name" value="G_PROTEIN_RECEP_F1_1"/>
    <property type="match status" value="1"/>
</dbReference>
<dbReference type="PROSITE" id="PS50262">
    <property type="entry name" value="G_PROTEIN_RECEP_F1_2"/>
    <property type="match status" value="1"/>
</dbReference>
<sequence length="470" mass="52081">MKLALHRIAGATMAALTTEVQYLGSNDASYEDPQADAALMKSRFNFEKPYSASSSLHRLIPGNKELIYGGLSTILPTNASDFPLSNGSGEATQCGEDIVDNMECFMILTPAQQLVIVILAITLGTFTVLENFVVLCVILHSHTLRSRPSYHFIGSLAVADLIGSIIFVYSFLDFHVLHRKDSPSIFLFKLAGVIASFTASVGSLFLTAIDRYVSIHRPMAYKRIITKTKAVIAFSVMWAISIEFSLLPLLGWNCKRLHSVCSDIFPLIDEKYLMFWIGMTTVLLLFIIYAYMFILWKSHHHAVRMLSRSSQRSIIVYTSEGTKVQTVRPEQARMDLRLAKTLVLILVALIICWGPLLAIMVYDLFGRVNDFIKTVFAFCSMLCLLNSTINPVIYAMRSKDLRRAFVNICHMCRGTTQSLDSSAESDWNSRSVRSTGGRAGKDRSVGGKPQVKVAQVTVSGVTASSPAEAV</sequence>
<name>CNR1B_TAKRU</name>
<reference key="1">
    <citation type="journal article" date="1996" name="Genomics">
        <title>Molecular cloning of two cannabinoid type 1-like receptor genes from the puffer fish Fugu rubripes.</title>
        <authorList>
            <person name="Yamaguchi F."/>
            <person name="Macrae A."/>
            <person name="Brenner S."/>
        </authorList>
    </citation>
    <scope>NUCLEOTIDE SEQUENCE [GENOMIC DNA]</scope>
    <source>
        <tissue>Testis</tissue>
    </source>
</reference>
<protein>
    <recommendedName>
        <fullName>Cannabinoid receptor type 1B</fullName>
    </recommendedName>
</protein>
<proteinExistence type="inferred from homology"/>